<protein>
    <recommendedName>
        <fullName evidence="1">UvrABC system protein C</fullName>
        <shortName evidence="1">Protein UvrC</shortName>
    </recommendedName>
    <alternativeName>
        <fullName evidence="1">Excinuclease ABC subunit C</fullName>
    </alternativeName>
</protein>
<organism>
    <name type="scientific">Saccharophagus degradans (strain 2-40 / ATCC 43961 / DSM 17024)</name>
    <dbReference type="NCBI Taxonomy" id="203122"/>
    <lineage>
        <taxon>Bacteria</taxon>
        <taxon>Pseudomonadati</taxon>
        <taxon>Pseudomonadota</taxon>
        <taxon>Gammaproteobacteria</taxon>
        <taxon>Cellvibrionales</taxon>
        <taxon>Cellvibrionaceae</taxon>
        <taxon>Saccharophagus</taxon>
    </lineage>
</organism>
<comment type="function">
    <text evidence="1">The UvrABC repair system catalyzes the recognition and processing of DNA lesions. UvrC both incises the 5' and 3' sides of the lesion. The N-terminal half is responsible for the 3' incision and the C-terminal half is responsible for the 5' incision.</text>
</comment>
<comment type="subunit">
    <text evidence="1">Interacts with UvrB in an incision complex.</text>
</comment>
<comment type="subcellular location">
    <subcellularLocation>
        <location evidence="1">Cytoplasm</location>
    </subcellularLocation>
</comment>
<comment type="similarity">
    <text evidence="1">Belongs to the UvrC family.</text>
</comment>
<dbReference type="EMBL" id="CP000282">
    <property type="protein sequence ID" value="ABD81313.1"/>
    <property type="molecule type" value="Genomic_DNA"/>
</dbReference>
<dbReference type="RefSeq" id="WP_011468531.1">
    <property type="nucleotide sequence ID" value="NC_007912.1"/>
</dbReference>
<dbReference type="SMR" id="Q21J16"/>
<dbReference type="STRING" id="203122.Sde_2053"/>
<dbReference type="GeneID" id="98613727"/>
<dbReference type="KEGG" id="sde:Sde_2053"/>
<dbReference type="eggNOG" id="COG0322">
    <property type="taxonomic scope" value="Bacteria"/>
</dbReference>
<dbReference type="HOGENOM" id="CLU_014841_3_0_6"/>
<dbReference type="OrthoDB" id="9804933at2"/>
<dbReference type="Proteomes" id="UP000001947">
    <property type="component" value="Chromosome"/>
</dbReference>
<dbReference type="GO" id="GO:0005737">
    <property type="term" value="C:cytoplasm"/>
    <property type="evidence" value="ECO:0007669"/>
    <property type="project" value="UniProtKB-SubCell"/>
</dbReference>
<dbReference type="GO" id="GO:0009380">
    <property type="term" value="C:excinuclease repair complex"/>
    <property type="evidence" value="ECO:0007669"/>
    <property type="project" value="InterPro"/>
</dbReference>
<dbReference type="GO" id="GO:0003677">
    <property type="term" value="F:DNA binding"/>
    <property type="evidence" value="ECO:0007669"/>
    <property type="project" value="UniProtKB-UniRule"/>
</dbReference>
<dbReference type="GO" id="GO:0009381">
    <property type="term" value="F:excinuclease ABC activity"/>
    <property type="evidence" value="ECO:0007669"/>
    <property type="project" value="UniProtKB-UniRule"/>
</dbReference>
<dbReference type="GO" id="GO:0006289">
    <property type="term" value="P:nucleotide-excision repair"/>
    <property type="evidence" value="ECO:0007669"/>
    <property type="project" value="UniProtKB-UniRule"/>
</dbReference>
<dbReference type="GO" id="GO:0009432">
    <property type="term" value="P:SOS response"/>
    <property type="evidence" value="ECO:0007669"/>
    <property type="project" value="UniProtKB-UniRule"/>
</dbReference>
<dbReference type="CDD" id="cd10434">
    <property type="entry name" value="GIY-YIG_UvrC_Cho"/>
    <property type="match status" value="1"/>
</dbReference>
<dbReference type="FunFam" id="3.30.420.340:FF:000001">
    <property type="entry name" value="UvrABC system protein C"/>
    <property type="match status" value="1"/>
</dbReference>
<dbReference type="FunFam" id="3.40.1440.10:FF:000001">
    <property type="entry name" value="UvrABC system protein C"/>
    <property type="match status" value="1"/>
</dbReference>
<dbReference type="Gene3D" id="1.10.150.20">
    <property type="entry name" value="5' to 3' exonuclease, C-terminal subdomain"/>
    <property type="match status" value="1"/>
</dbReference>
<dbReference type="Gene3D" id="3.40.1440.10">
    <property type="entry name" value="GIY-YIG endonuclease"/>
    <property type="match status" value="1"/>
</dbReference>
<dbReference type="Gene3D" id="4.10.860.10">
    <property type="entry name" value="UVR domain"/>
    <property type="match status" value="1"/>
</dbReference>
<dbReference type="Gene3D" id="3.30.420.340">
    <property type="entry name" value="UvrC, RNAse H endonuclease domain"/>
    <property type="match status" value="1"/>
</dbReference>
<dbReference type="HAMAP" id="MF_00203">
    <property type="entry name" value="UvrC"/>
    <property type="match status" value="1"/>
</dbReference>
<dbReference type="InterPro" id="IPR000305">
    <property type="entry name" value="GIY-YIG_endonuc"/>
</dbReference>
<dbReference type="InterPro" id="IPR035901">
    <property type="entry name" value="GIY-YIG_endonuc_sf"/>
</dbReference>
<dbReference type="InterPro" id="IPR047296">
    <property type="entry name" value="GIY-YIG_UvrC_Cho"/>
</dbReference>
<dbReference type="InterPro" id="IPR003583">
    <property type="entry name" value="Hlx-hairpin-Hlx_DNA-bd_motif"/>
</dbReference>
<dbReference type="InterPro" id="IPR010994">
    <property type="entry name" value="RuvA_2-like"/>
</dbReference>
<dbReference type="InterPro" id="IPR001943">
    <property type="entry name" value="UVR_dom"/>
</dbReference>
<dbReference type="InterPro" id="IPR036876">
    <property type="entry name" value="UVR_dom_sf"/>
</dbReference>
<dbReference type="InterPro" id="IPR050066">
    <property type="entry name" value="UvrABC_protein_C"/>
</dbReference>
<dbReference type="InterPro" id="IPR004791">
    <property type="entry name" value="UvrC"/>
</dbReference>
<dbReference type="InterPro" id="IPR001162">
    <property type="entry name" value="UvrC_RNase_H_dom"/>
</dbReference>
<dbReference type="InterPro" id="IPR038476">
    <property type="entry name" value="UvrC_RNase_H_dom_sf"/>
</dbReference>
<dbReference type="NCBIfam" id="NF001824">
    <property type="entry name" value="PRK00558.1-5"/>
    <property type="match status" value="1"/>
</dbReference>
<dbReference type="NCBIfam" id="TIGR00194">
    <property type="entry name" value="uvrC"/>
    <property type="match status" value="1"/>
</dbReference>
<dbReference type="PANTHER" id="PTHR30562:SF1">
    <property type="entry name" value="UVRABC SYSTEM PROTEIN C"/>
    <property type="match status" value="1"/>
</dbReference>
<dbReference type="PANTHER" id="PTHR30562">
    <property type="entry name" value="UVRC/OXIDOREDUCTASE"/>
    <property type="match status" value="1"/>
</dbReference>
<dbReference type="Pfam" id="PF01541">
    <property type="entry name" value="GIY-YIG"/>
    <property type="match status" value="1"/>
</dbReference>
<dbReference type="Pfam" id="PF14520">
    <property type="entry name" value="HHH_5"/>
    <property type="match status" value="1"/>
</dbReference>
<dbReference type="Pfam" id="PF02151">
    <property type="entry name" value="UVR"/>
    <property type="match status" value="1"/>
</dbReference>
<dbReference type="Pfam" id="PF22920">
    <property type="entry name" value="UvrC_RNaseH"/>
    <property type="match status" value="1"/>
</dbReference>
<dbReference type="Pfam" id="PF08459">
    <property type="entry name" value="UvrC_RNaseH_dom"/>
    <property type="match status" value="1"/>
</dbReference>
<dbReference type="SMART" id="SM00465">
    <property type="entry name" value="GIYc"/>
    <property type="match status" value="1"/>
</dbReference>
<dbReference type="SMART" id="SM00278">
    <property type="entry name" value="HhH1"/>
    <property type="match status" value="2"/>
</dbReference>
<dbReference type="SUPFAM" id="SSF46600">
    <property type="entry name" value="C-terminal UvrC-binding domain of UvrB"/>
    <property type="match status" value="1"/>
</dbReference>
<dbReference type="SUPFAM" id="SSF82771">
    <property type="entry name" value="GIY-YIG endonuclease"/>
    <property type="match status" value="1"/>
</dbReference>
<dbReference type="SUPFAM" id="SSF47781">
    <property type="entry name" value="RuvA domain 2-like"/>
    <property type="match status" value="1"/>
</dbReference>
<dbReference type="PROSITE" id="PS50164">
    <property type="entry name" value="GIY_YIG"/>
    <property type="match status" value="1"/>
</dbReference>
<dbReference type="PROSITE" id="PS50151">
    <property type="entry name" value="UVR"/>
    <property type="match status" value="1"/>
</dbReference>
<dbReference type="PROSITE" id="PS50165">
    <property type="entry name" value="UVRC"/>
    <property type="match status" value="1"/>
</dbReference>
<name>UVRC_SACD2</name>
<reference key="1">
    <citation type="journal article" date="2008" name="PLoS Genet.">
        <title>Complete genome sequence of the complex carbohydrate-degrading marine bacterium, Saccharophagus degradans strain 2-40 T.</title>
        <authorList>
            <person name="Weiner R.M."/>
            <person name="Taylor L.E. II"/>
            <person name="Henrissat B."/>
            <person name="Hauser L."/>
            <person name="Land M."/>
            <person name="Coutinho P.M."/>
            <person name="Rancurel C."/>
            <person name="Saunders E.H."/>
            <person name="Longmire A.G."/>
            <person name="Zhang H."/>
            <person name="Bayer E.A."/>
            <person name="Gilbert H.J."/>
            <person name="Larimer F."/>
            <person name="Zhulin I.B."/>
            <person name="Ekborg N.A."/>
            <person name="Lamed R."/>
            <person name="Richardson P.M."/>
            <person name="Borovok I."/>
            <person name="Hutcheson S."/>
        </authorList>
    </citation>
    <scope>NUCLEOTIDE SEQUENCE [LARGE SCALE GENOMIC DNA]</scope>
    <source>
        <strain>2-40 / ATCC 43961 / DSM 17024</strain>
    </source>
</reference>
<sequence>MSQHQPPPVFDSTSFLKNVTKLPGVYQMYDADGAILYVGKAKNLKNRLSSYFRATGLTPKTHALVKRIQAIEVTVTPSEAEALVLEHNLIKSQKPPFNILLRDDKSFPYIFISEGEPYPKLAFHRGPKKKKGQYFGPFPNASAVKETLNFLQRTFRVRQCEDSVFRSRTRPCLQYQIGRCTGPCVEAISVEDYAVDLAHTAMFLDGKSEVLQQELQVEMEQASQALDFERAVVVRDQITDLRQVQAQQVMEAGYSNQDVVACASESGVHCIHILYVRQGRIVGSKSYLPKTKLDSTEEDVLSAFLAHHYLGGAAMDVPPHIIISHKLADQLIIGEAVEKATGKQLKLTHNVRTYRAKWLAMALEAARQNLKNHLNNKQTLVARFESLQDILGLDETPNRIECFDISHSSGELTVGSCVVFDQNGAKKSDYRRFNIEGIKAGDDYAAMEQVLTRRYTRLQKESSSMPDLVLIDGGKGQLSKAKAVVEELGIHDMMLIGVAKGTTRKPGFETLVLTSGAERVLKADSAALHLIQQIRDEAHRFAITGHKQRRDKKRRTSVLEGIPGVGPKRRKELLVHFGGLQEVLRANVDDLAKAPSISKKMAQEIYNVLHSE</sequence>
<proteinExistence type="inferred from homology"/>
<gene>
    <name evidence="1" type="primary">uvrC</name>
    <name type="ordered locus">Sde_2053</name>
</gene>
<evidence type="ECO:0000255" key="1">
    <source>
        <dbReference type="HAMAP-Rule" id="MF_00203"/>
    </source>
</evidence>
<keyword id="KW-0963">Cytoplasm</keyword>
<keyword id="KW-0227">DNA damage</keyword>
<keyword id="KW-0228">DNA excision</keyword>
<keyword id="KW-0234">DNA repair</keyword>
<keyword id="KW-0267">Excision nuclease</keyword>
<keyword id="KW-1185">Reference proteome</keyword>
<keyword id="KW-0742">SOS response</keyword>
<feature type="chain" id="PRO_0000264943" description="UvrABC system protein C">
    <location>
        <begin position="1"/>
        <end position="612"/>
    </location>
</feature>
<feature type="domain" description="GIY-YIG" evidence="1">
    <location>
        <begin position="21"/>
        <end position="99"/>
    </location>
</feature>
<feature type="domain" description="UVR" evidence="1">
    <location>
        <begin position="209"/>
        <end position="244"/>
    </location>
</feature>
<accession>Q21J16</accession>